<accession>Q2LQM2</accession>
<proteinExistence type="inferred from homology"/>
<sequence>MPNPVKRHSRTRRNMRRAHDFLTPVQASACPQCGKFKLPHRVCPYCGTYKGRTVIKVENLA</sequence>
<keyword id="KW-1185">Reference proteome</keyword>
<keyword id="KW-0687">Ribonucleoprotein</keyword>
<keyword id="KW-0689">Ribosomal protein</keyword>
<comment type="similarity">
    <text evidence="1">Belongs to the bacterial ribosomal protein bL32 family.</text>
</comment>
<dbReference type="EMBL" id="CP000252">
    <property type="protein sequence ID" value="ABC76069.1"/>
    <property type="molecule type" value="Genomic_DNA"/>
</dbReference>
<dbReference type="RefSeq" id="WP_011416104.1">
    <property type="nucleotide sequence ID" value="NC_007759.1"/>
</dbReference>
<dbReference type="SMR" id="Q2LQM2"/>
<dbReference type="STRING" id="56780.SYN_02363"/>
<dbReference type="KEGG" id="sat:SYN_02363"/>
<dbReference type="eggNOG" id="COG0333">
    <property type="taxonomic scope" value="Bacteria"/>
</dbReference>
<dbReference type="HOGENOM" id="CLU_129084_1_3_7"/>
<dbReference type="InParanoid" id="Q2LQM2"/>
<dbReference type="OrthoDB" id="9801927at2"/>
<dbReference type="Proteomes" id="UP000001933">
    <property type="component" value="Chromosome"/>
</dbReference>
<dbReference type="GO" id="GO:0015934">
    <property type="term" value="C:large ribosomal subunit"/>
    <property type="evidence" value="ECO:0007669"/>
    <property type="project" value="InterPro"/>
</dbReference>
<dbReference type="GO" id="GO:0003735">
    <property type="term" value="F:structural constituent of ribosome"/>
    <property type="evidence" value="ECO:0007669"/>
    <property type="project" value="InterPro"/>
</dbReference>
<dbReference type="GO" id="GO:0006412">
    <property type="term" value="P:translation"/>
    <property type="evidence" value="ECO:0007669"/>
    <property type="project" value="UniProtKB-UniRule"/>
</dbReference>
<dbReference type="Gene3D" id="1.20.5.640">
    <property type="entry name" value="Single helix bin"/>
    <property type="match status" value="1"/>
</dbReference>
<dbReference type="HAMAP" id="MF_00340">
    <property type="entry name" value="Ribosomal_bL32"/>
    <property type="match status" value="1"/>
</dbReference>
<dbReference type="InterPro" id="IPR002677">
    <property type="entry name" value="Ribosomal_bL32"/>
</dbReference>
<dbReference type="InterPro" id="IPR044957">
    <property type="entry name" value="Ribosomal_bL32_bact"/>
</dbReference>
<dbReference type="InterPro" id="IPR011332">
    <property type="entry name" value="Ribosomal_zn-bd"/>
</dbReference>
<dbReference type="NCBIfam" id="TIGR01031">
    <property type="entry name" value="rpmF_bact"/>
    <property type="match status" value="1"/>
</dbReference>
<dbReference type="PANTHER" id="PTHR35534">
    <property type="entry name" value="50S RIBOSOMAL PROTEIN L32"/>
    <property type="match status" value="1"/>
</dbReference>
<dbReference type="PANTHER" id="PTHR35534:SF1">
    <property type="entry name" value="LARGE RIBOSOMAL SUBUNIT PROTEIN BL32"/>
    <property type="match status" value="1"/>
</dbReference>
<dbReference type="Pfam" id="PF01783">
    <property type="entry name" value="Ribosomal_L32p"/>
    <property type="match status" value="1"/>
</dbReference>
<dbReference type="SUPFAM" id="SSF57829">
    <property type="entry name" value="Zn-binding ribosomal proteins"/>
    <property type="match status" value="1"/>
</dbReference>
<gene>
    <name evidence="1" type="primary">rpmF</name>
    <name type="ordered locus">SYNAS_01900</name>
    <name type="ORF">SYN_02363</name>
</gene>
<reference key="1">
    <citation type="journal article" date="2007" name="Proc. Natl. Acad. Sci. U.S.A.">
        <title>The genome of Syntrophus aciditrophicus: life at the thermodynamic limit of microbial growth.</title>
        <authorList>
            <person name="McInerney M.J."/>
            <person name="Rohlin L."/>
            <person name="Mouttaki H."/>
            <person name="Kim U."/>
            <person name="Krupp R.S."/>
            <person name="Rios-Hernandez L."/>
            <person name="Sieber J."/>
            <person name="Struchtemeyer C.G."/>
            <person name="Bhattacharyya A."/>
            <person name="Campbell J.W."/>
            <person name="Gunsalus R.P."/>
        </authorList>
    </citation>
    <scope>NUCLEOTIDE SEQUENCE [LARGE SCALE GENOMIC DNA]</scope>
    <source>
        <strain>SB</strain>
    </source>
</reference>
<organism>
    <name type="scientific">Syntrophus aciditrophicus (strain SB)</name>
    <dbReference type="NCBI Taxonomy" id="56780"/>
    <lineage>
        <taxon>Bacteria</taxon>
        <taxon>Pseudomonadati</taxon>
        <taxon>Thermodesulfobacteriota</taxon>
        <taxon>Syntrophia</taxon>
        <taxon>Syntrophales</taxon>
        <taxon>Syntrophaceae</taxon>
        <taxon>Syntrophus</taxon>
    </lineage>
</organism>
<protein>
    <recommendedName>
        <fullName evidence="1">Large ribosomal subunit protein bL32</fullName>
    </recommendedName>
    <alternativeName>
        <fullName evidence="2">50S ribosomal protein L32</fullName>
    </alternativeName>
</protein>
<evidence type="ECO:0000255" key="1">
    <source>
        <dbReference type="HAMAP-Rule" id="MF_00340"/>
    </source>
</evidence>
<evidence type="ECO:0000305" key="2"/>
<name>RL32_SYNAS</name>
<feature type="chain" id="PRO_0000296591" description="Large ribosomal subunit protein bL32">
    <location>
        <begin position="1"/>
        <end position="61"/>
    </location>
</feature>